<proteinExistence type="inferred from homology"/>
<dbReference type="EMBL" id="CP000494">
    <property type="protein sequence ID" value="ABQ32363.1"/>
    <property type="molecule type" value="Genomic_DNA"/>
</dbReference>
<dbReference type="RefSeq" id="WP_009025947.1">
    <property type="nucleotide sequence ID" value="NC_009485.1"/>
</dbReference>
<dbReference type="SMR" id="A5E869"/>
<dbReference type="STRING" id="288000.BBta_0060"/>
<dbReference type="KEGG" id="bbt:BBta_0060"/>
<dbReference type="eggNOG" id="COG0184">
    <property type="taxonomic scope" value="Bacteria"/>
</dbReference>
<dbReference type="HOGENOM" id="CLU_148518_0_0_5"/>
<dbReference type="OrthoDB" id="9799262at2"/>
<dbReference type="Proteomes" id="UP000000246">
    <property type="component" value="Chromosome"/>
</dbReference>
<dbReference type="GO" id="GO:0022627">
    <property type="term" value="C:cytosolic small ribosomal subunit"/>
    <property type="evidence" value="ECO:0007669"/>
    <property type="project" value="TreeGrafter"/>
</dbReference>
<dbReference type="GO" id="GO:0019843">
    <property type="term" value="F:rRNA binding"/>
    <property type="evidence" value="ECO:0007669"/>
    <property type="project" value="UniProtKB-UniRule"/>
</dbReference>
<dbReference type="GO" id="GO:0003735">
    <property type="term" value="F:structural constituent of ribosome"/>
    <property type="evidence" value="ECO:0007669"/>
    <property type="project" value="InterPro"/>
</dbReference>
<dbReference type="GO" id="GO:0006412">
    <property type="term" value="P:translation"/>
    <property type="evidence" value="ECO:0007669"/>
    <property type="project" value="UniProtKB-UniRule"/>
</dbReference>
<dbReference type="CDD" id="cd00353">
    <property type="entry name" value="Ribosomal_S15p_S13e"/>
    <property type="match status" value="1"/>
</dbReference>
<dbReference type="FunFam" id="1.10.287.10:FF:000002">
    <property type="entry name" value="30S ribosomal protein S15"/>
    <property type="match status" value="1"/>
</dbReference>
<dbReference type="Gene3D" id="6.10.250.3130">
    <property type="match status" value="1"/>
</dbReference>
<dbReference type="Gene3D" id="1.10.287.10">
    <property type="entry name" value="S15/NS1, RNA-binding"/>
    <property type="match status" value="1"/>
</dbReference>
<dbReference type="HAMAP" id="MF_01343_B">
    <property type="entry name" value="Ribosomal_uS15_B"/>
    <property type="match status" value="1"/>
</dbReference>
<dbReference type="InterPro" id="IPR000589">
    <property type="entry name" value="Ribosomal_uS15"/>
</dbReference>
<dbReference type="InterPro" id="IPR005290">
    <property type="entry name" value="Ribosomal_uS15_bac-type"/>
</dbReference>
<dbReference type="InterPro" id="IPR009068">
    <property type="entry name" value="uS15_NS1_RNA-bd_sf"/>
</dbReference>
<dbReference type="NCBIfam" id="TIGR00952">
    <property type="entry name" value="S15_bact"/>
    <property type="match status" value="1"/>
</dbReference>
<dbReference type="PANTHER" id="PTHR23321">
    <property type="entry name" value="RIBOSOMAL PROTEIN S15, BACTERIAL AND ORGANELLAR"/>
    <property type="match status" value="1"/>
</dbReference>
<dbReference type="PANTHER" id="PTHR23321:SF26">
    <property type="entry name" value="SMALL RIBOSOMAL SUBUNIT PROTEIN US15M"/>
    <property type="match status" value="1"/>
</dbReference>
<dbReference type="Pfam" id="PF00312">
    <property type="entry name" value="Ribosomal_S15"/>
    <property type="match status" value="1"/>
</dbReference>
<dbReference type="SMART" id="SM01387">
    <property type="entry name" value="Ribosomal_S15"/>
    <property type="match status" value="1"/>
</dbReference>
<dbReference type="SUPFAM" id="SSF47060">
    <property type="entry name" value="S15/NS1 RNA-binding domain"/>
    <property type="match status" value="1"/>
</dbReference>
<dbReference type="PROSITE" id="PS00362">
    <property type="entry name" value="RIBOSOMAL_S15"/>
    <property type="match status" value="1"/>
</dbReference>
<gene>
    <name evidence="1" type="primary">rpsO</name>
    <name type="ordered locus">BBta_0060</name>
</gene>
<feature type="chain" id="PRO_1000054755" description="Small ribosomal subunit protein uS15">
    <location>
        <begin position="1"/>
        <end position="89"/>
    </location>
</feature>
<evidence type="ECO:0000255" key="1">
    <source>
        <dbReference type="HAMAP-Rule" id="MF_01343"/>
    </source>
</evidence>
<evidence type="ECO:0000305" key="2"/>
<protein>
    <recommendedName>
        <fullName evidence="1">Small ribosomal subunit protein uS15</fullName>
    </recommendedName>
    <alternativeName>
        <fullName evidence="2">30S ribosomal protein S15</fullName>
    </alternativeName>
</protein>
<sequence>MSVTAERKAEIIKANATKAGDTGSPEVQVAILSERINNLTSHFKTHGKDNHSRRGLLKLVSTRRSLLDYLKKNDEARYKALLEKHNIRR</sequence>
<keyword id="KW-1185">Reference proteome</keyword>
<keyword id="KW-0687">Ribonucleoprotein</keyword>
<keyword id="KW-0689">Ribosomal protein</keyword>
<keyword id="KW-0694">RNA-binding</keyword>
<keyword id="KW-0699">rRNA-binding</keyword>
<organism>
    <name type="scientific">Bradyrhizobium sp. (strain BTAi1 / ATCC BAA-1182)</name>
    <dbReference type="NCBI Taxonomy" id="288000"/>
    <lineage>
        <taxon>Bacteria</taxon>
        <taxon>Pseudomonadati</taxon>
        <taxon>Pseudomonadota</taxon>
        <taxon>Alphaproteobacteria</taxon>
        <taxon>Hyphomicrobiales</taxon>
        <taxon>Nitrobacteraceae</taxon>
        <taxon>Bradyrhizobium</taxon>
    </lineage>
</organism>
<accession>A5E869</accession>
<reference key="1">
    <citation type="journal article" date="2007" name="Science">
        <title>Legumes symbioses: absence of nod genes in photosynthetic bradyrhizobia.</title>
        <authorList>
            <person name="Giraud E."/>
            <person name="Moulin L."/>
            <person name="Vallenet D."/>
            <person name="Barbe V."/>
            <person name="Cytryn E."/>
            <person name="Avarre J.-C."/>
            <person name="Jaubert M."/>
            <person name="Simon D."/>
            <person name="Cartieaux F."/>
            <person name="Prin Y."/>
            <person name="Bena G."/>
            <person name="Hannibal L."/>
            <person name="Fardoux J."/>
            <person name="Kojadinovic M."/>
            <person name="Vuillet L."/>
            <person name="Lajus A."/>
            <person name="Cruveiller S."/>
            <person name="Rouy Z."/>
            <person name="Mangenot S."/>
            <person name="Segurens B."/>
            <person name="Dossat C."/>
            <person name="Franck W.L."/>
            <person name="Chang W.-S."/>
            <person name="Saunders E."/>
            <person name="Bruce D."/>
            <person name="Richardson P."/>
            <person name="Normand P."/>
            <person name="Dreyfus B."/>
            <person name="Pignol D."/>
            <person name="Stacey G."/>
            <person name="Emerich D."/>
            <person name="Vermeglio A."/>
            <person name="Medigue C."/>
            <person name="Sadowsky M."/>
        </authorList>
    </citation>
    <scope>NUCLEOTIDE SEQUENCE [LARGE SCALE GENOMIC DNA]</scope>
    <source>
        <strain>BTAi1 / ATCC BAA-1182</strain>
    </source>
</reference>
<comment type="function">
    <text evidence="1">One of the primary rRNA binding proteins, it binds directly to 16S rRNA where it helps nucleate assembly of the platform of the 30S subunit by binding and bridging several RNA helices of the 16S rRNA.</text>
</comment>
<comment type="function">
    <text evidence="1">Forms an intersubunit bridge (bridge B4) with the 23S rRNA of the 50S subunit in the ribosome.</text>
</comment>
<comment type="subunit">
    <text evidence="1">Part of the 30S ribosomal subunit. Forms a bridge to the 50S subunit in the 70S ribosome, contacting the 23S rRNA.</text>
</comment>
<comment type="similarity">
    <text evidence="1">Belongs to the universal ribosomal protein uS15 family.</text>
</comment>
<name>RS15_BRASB</name>